<accession>Q9X1Z1</accession>
<comment type="function">
    <text evidence="2 3 4">ATP-binding (A) component of a common energy-coupling factor (ECF) ABC-transporter complex. Unlike classic ABC transporters this ECF transporter provides the energy necessary to transport a number of different substrates (Probable). Expression of the complex plus RibU in E.coli allows riboflavin uptake; uptake does not occur in the absence of RibU or the EcfA1A2T complex.</text>
</comment>
<comment type="subunit">
    <text evidence="3">Forms a heterodimer with EcfA2. Forms a stable energy-coupling factor (ECF) transporter complex composed of 2 membrane-embedded substrate-binding proteins (S component, RibU, BioY), 2 ATP-binding proteins (A component) and 2 transmembrane proteins (T component) upon coexpression in E.coli. Stable subcomplexes with both A plus T components can also be isolated. This complex interacts with at least 2 substrate-specific components, BioY and RibU.</text>
</comment>
<comment type="interaction">
    <interactant intactId="EBI-16160756">
        <id>Q9X1Z1</id>
    </interactant>
    <interactant intactId="EBI-16160779">
        <id>Q9WY65</id>
        <label>ecfA2</label>
    </interactant>
    <organismsDiffer>false</organismsDiffer>
    <experiments>2</experiments>
</comment>
<comment type="subcellular location">
    <subcellularLocation>
        <location evidence="5">Cell inner membrane</location>
        <topology evidence="5">Peripheral membrane protein</topology>
    </subcellularLocation>
</comment>
<comment type="miscellaneous">
    <text>Structure 4HLU is probably in the open state.</text>
</comment>
<comment type="similarity">
    <text evidence="2">Belongs to the ABC transporter superfamily. Energy-coupling factor EcfA family.</text>
</comment>
<organism>
    <name type="scientific">Thermotoga maritima (strain ATCC 43589 / DSM 3109 / JCM 10099 / NBRC 100826 / MSB8)</name>
    <dbReference type="NCBI Taxonomy" id="243274"/>
    <lineage>
        <taxon>Bacteria</taxon>
        <taxon>Thermotogati</taxon>
        <taxon>Thermotogota</taxon>
        <taxon>Thermotogae</taxon>
        <taxon>Thermotogales</taxon>
        <taxon>Thermotogaceae</taxon>
        <taxon>Thermotoga</taxon>
    </lineage>
</organism>
<name>ECFA1_THEMA</name>
<keyword id="KW-0002">3D-structure</keyword>
<keyword id="KW-0067">ATP-binding</keyword>
<keyword id="KW-0997">Cell inner membrane</keyword>
<keyword id="KW-1003">Cell membrane</keyword>
<keyword id="KW-0472">Membrane</keyword>
<keyword id="KW-0547">Nucleotide-binding</keyword>
<keyword id="KW-1185">Reference proteome</keyword>
<keyword id="KW-1278">Translocase</keyword>
<keyword id="KW-0813">Transport</keyword>
<feature type="chain" id="PRO_0000092116" description="Energy-coupling factor transporter ATP-binding protein EcfA1">
    <location>
        <begin position="1"/>
        <end position="259"/>
    </location>
</feature>
<feature type="domain" description="ABC transporter" evidence="2">
    <location>
        <begin position="3"/>
        <end position="230"/>
    </location>
</feature>
<feature type="active site" description="Proton acceptor" evidence="1">
    <location>
        <position position="157"/>
    </location>
</feature>
<feature type="binding site">
    <location>
        <begin position="38"/>
        <end position="43"/>
    </location>
    <ligand>
        <name>ATP</name>
        <dbReference type="ChEBI" id="CHEBI:30616"/>
    </ligand>
</feature>
<feature type="strand" evidence="6">
    <location>
        <begin position="2"/>
        <end position="7"/>
    </location>
</feature>
<feature type="strand" evidence="6">
    <location>
        <begin position="9"/>
        <end position="18"/>
    </location>
</feature>
<feature type="strand" evidence="6">
    <location>
        <begin position="30"/>
        <end position="34"/>
    </location>
</feature>
<feature type="helix" evidence="6">
    <location>
        <begin position="41"/>
        <end position="49"/>
    </location>
</feature>
<feature type="strand" evidence="7">
    <location>
        <begin position="55"/>
        <end position="60"/>
    </location>
</feature>
<feature type="helix" evidence="6">
    <location>
        <begin position="67"/>
        <end position="73"/>
    </location>
</feature>
<feature type="strand" evidence="6">
    <location>
        <begin position="74"/>
        <end position="77"/>
    </location>
</feature>
<feature type="strand" evidence="6">
    <location>
        <begin position="79"/>
        <end position="81"/>
    </location>
</feature>
<feature type="turn" evidence="6">
    <location>
        <begin position="82"/>
        <end position="84"/>
    </location>
</feature>
<feature type="strand" evidence="7">
    <location>
        <begin position="87"/>
        <end position="89"/>
    </location>
</feature>
<feature type="helix" evidence="6">
    <location>
        <begin position="90"/>
        <end position="95"/>
    </location>
</feature>
<feature type="strand" evidence="6">
    <location>
        <begin position="98"/>
        <end position="101"/>
    </location>
</feature>
<feature type="helix" evidence="6">
    <location>
        <begin position="108"/>
        <end position="118"/>
    </location>
</feature>
<feature type="helix" evidence="6">
    <location>
        <begin position="129"/>
        <end position="131"/>
    </location>
</feature>
<feature type="helix" evidence="6">
    <location>
        <begin position="134"/>
        <end position="146"/>
    </location>
</feature>
<feature type="strand" evidence="6">
    <location>
        <begin position="151"/>
        <end position="157"/>
    </location>
</feature>
<feature type="turn" evidence="6">
    <location>
        <begin position="158"/>
        <end position="161"/>
    </location>
</feature>
<feature type="helix" evidence="6">
    <location>
        <begin position="164"/>
        <end position="178"/>
    </location>
</feature>
<feature type="turn" evidence="6">
    <location>
        <begin position="179"/>
        <end position="181"/>
    </location>
</feature>
<feature type="strand" evidence="6">
    <location>
        <begin position="183"/>
        <end position="187"/>
    </location>
</feature>
<feature type="helix" evidence="6">
    <location>
        <begin position="191"/>
        <end position="193"/>
    </location>
</feature>
<feature type="strand" evidence="6">
    <location>
        <begin position="199"/>
        <end position="204"/>
    </location>
</feature>
<feature type="strand" evidence="6">
    <location>
        <begin position="207"/>
        <end position="212"/>
    </location>
</feature>
<feature type="helix" evidence="6">
    <location>
        <begin position="214"/>
        <end position="220"/>
    </location>
</feature>
<feature type="strand" evidence="6">
    <location>
        <begin position="223"/>
        <end position="225"/>
    </location>
</feature>
<feature type="helix" evidence="6">
    <location>
        <begin position="229"/>
        <end position="237"/>
    </location>
</feature>
<feature type="helix" evidence="7">
    <location>
        <begin position="242"/>
        <end position="246"/>
    </location>
</feature>
<evidence type="ECO:0000255" key="1"/>
<evidence type="ECO:0000255" key="2">
    <source>
        <dbReference type="HAMAP-Rule" id="MF_01710"/>
    </source>
</evidence>
<evidence type="ECO:0000269" key="3">
    <source>
    </source>
</evidence>
<evidence type="ECO:0000305" key="4"/>
<evidence type="ECO:0000305" key="5">
    <source>
    </source>
</evidence>
<evidence type="ECO:0007829" key="6">
    <source>
        <dbReference type="PDB" id="4HLU"/>
    </source>
</evidence>
<evidence type="ECO:0007829" key="7">
    <source>
        <dbReference type="PDB" id="4ZIR"/>
    </source>
</evidence>
<proteinExistence type="evidence at protein level"/>
<gene>
    <name evidence="2" type="primary">ecfA1</name>
    <name type="synonym">cbiO</name>
    <name type="synonym">ecfA'</name>
    <name type="ordered locus">TM_1663</name>
</gene>
<sequence length="259" mass="29376">MKITLNSVSFRYNGDYVLKDVNAEFETGKIYVVVGKNGSGKTTLLKILAGLLEAEGEIFLDGSPADPFLLRKNVGYVFQNPSSQIIGATVEEDVAFSLEIMGLDESEMRKRIKKVLELVGLSGLEKEDPLNLSGGQKQRLAIASMLARDTRFLALDEPVSMLDPPSQREIFQVLESLKNEGKGIILVTHELEYLDDMDFILHISNGTIDFCGSWEEFVEREFDDVEIPFKWKLWKKCGKINLWEDRYENSGNQRRRDTV</sequence>
<protein>
    <recommendedName>
        <fullName evidence="2">Energy-coupling factor transporter ATP-binding protein EcfA1</fullName>
        <shortName evidence="2">ECF transporter A component EcfA1</shortName>
        <ecNumber evidence="2">7.-.-.-</ecNumber>
    </recommendedName>
</protein>
<dbReference type="EC" id="7.-.-.-" evidence="2"/>
<dbReference type="EMBL" id="AE000512">
    <property type="protein sequence ID" value="AAD36730.1"/>
    <property type="molecule type" value="Genomic_DNA"/>
</dbReference>
<dbReference type="PIR" id="E72224">
    <property type="entry name" value="E72224"/>
</dbReference>
<dbReference type="RefSeq" id="NP_229463.1">
    <property type="nucleotide sequence ID" value="NC_000853.1"/>
</dbReference>
<dbReference type="RefSeq" id="WP_004082181.1">
    <property type="nucleotide sequence ID" value="NZ_CP011107.1"/>
</dbReference>
<dbReference type="PDB" id="4HLU">
    <property type="method" value="X-ray"/>
    <property type="resolution" value="2.70 A"/>
    <property type="chains" value="C/D=2-259"/>
</dbReference>
<dbReference type="PDB" id="4ZIR">
    <property type="method" value="X-ray"/>
    <property type="resolution" value="3.00 A"/>
    <property type="chains" value="B=2-259"/>
</dbReference>
<dbReference type="PDBsum" id="4HLU"/>
<dbReference type="PDBsum" id="4ZIR"/>
<dbReference type="SMR" id="Q9X1Z1"/>
<dbReference type="DIP" id="DIP-61611N"/>
<dbReference type="IntAct" id="Q9X1Z1">
    <property type="interactions" value="1"/>
</dbReference>
<dbReference type="STRING" id="243274.TM_1663"/>
<dbReference type="TCDB" id="3.A.1.25.5">
    <property type="family name" value="the atp-binding cassette (abc) superfamily"/>
</dbReference>
<dbReference type="PaxDb" id="243274-THEMA_05930"/>
<dbReference type="DNASU" id="897908"/>
<dbReference type="EnsemblBacteria" id="AAD36730">
    <property type="protein sequence ID" value="AAD36730"/>
    <property type="gene ID" value="TM_1663"/>
</dbReference>
<dbReference type="KEGG" id="tma:TM1663"/>
<dbReference type="KEGG" id="tmi:THEMA_05930"/>
<dbReference type="KEGG" id="tmm:Tmari_1672"/>
<dbReference type="KEGG" id="tmw:THMA_1704"/>
<dbReference type="eggNOG" id="COG1122">
    <property type="taxonomic scope" value="Bacteria"/>
</dbReference>
<dbReference type="InParanoid" id="Q9X1Z1"/>
<dbReference type="OrthoDB" id="9784332at2"/>
<dbReference type="EvolutionaryTrace" id="Q9X1Z1"/>
<dbReference type="Proteomes" id="UP000008183">
    <property type="component" value="Chromosome"/>
</dbReference>
<dbReference type="GO" id="GO:0043190">
    <property type="term" value="C:ATP-binding cassette (ABC) transporter complex"/>
    <property type="evidence" value="ECO:0000318"/>
    <property type="project" value="GO_Central"/>
</dbReference>
<dbReference type="GO" id="GO:0005886">
    <property type="term" value="C:plasma membrane"/>
    <property type="evidence" value="ECO:0000314"/>
    <property type="project" value="UniProtKB"/>
</dbReference>
<dbReference type="GO" id="GO:0005524">
    <property type="term" value="F:ATP binding"/>
    <property type="evidence" value="ECO:0000314"/>
    <property type="project" value="UniProtKB"/>
</dbReference>
<dbReference type="GO" id="GO:0016887">
    <property type="term" value="F:ATP hydrolysis activity"/>
    <property type="evidence" value="ECO:0007669"/>
    <property type="project" value="InterPro"/>
</dbReference>
<dbReference type="GO" id="GO:0042626">
    <property type="term" value="F:ATPase-coupled transmembrane transporter activity"/>
    <property type="evidence" value="ECO:0000318"/>
    <property type="project" value="GO_Central"/>
</dbReference>
<dbReference type="GO" id="GO:0032217">
    <property type="term" value="F:riboflavin transmembrane transporter activity"/>
    <property type="evidence" value="ECO:0000316"/>
    <property type="project" value="UniProtKB"/>
</dbReference>
<dbReference type="GO" id="GO:0032218">
    <property type="term" value="P:riboflavin transport"/>
    <property type="evidence" value="ECO:0000316"/>
    <property type="project" value="UniProtKB"/>
</dbReference>
<dbReference type="CDD" id="cd03225">
    <property type="entry name" value="ABC_cobalt_CbiO_domain1"/>
    <property type="match status" value="1"/>
</dbReference>
<dbReference type="Gene3D" id="3.40.50.300">
    <property type="entry name" value="P-loop containing nucleotide triphosphate hydrolases"/>
    <property type="match status" value="1"/>
</dbReference>
<dbReference type="InterPro" id="IPR003593">
    <property type="entry name" value="AAA+_ATPase"/>
</dbReference>
<dbReference type="InterPro" id="IPR003439">
    <property type="entry name" value="ABC_transporter-like_ATP-bd"/>
</dbReference>
<dbReference type="InterPro" id="IPR017871">
    <property type="entry name" value="ABC_transporter-like_CS"/>
</dbReference>
<dbReference type="InterPro" id="IPR015856">
    <property type="entry name" value="ABC_transpr_CbiO/EcfA_su"/>
</dbReference>
<dbReference type="InterPro" id="IPR050095">
    <property type="entry name" value="ECF_ABC_transporter_ATP-bd"/>
</dbReference>
<dbReference type="InterPro" id="IPR027417">
    <property type="entry name" value="P-loop_NTPase"/>
</dbReference>
<dbReference type="PANTHER" id="PTHR43553:SF24">
    <property type="entry name" value="ENERGY-COUPLING FACTOR TRANSPORTER ATP-BINDING PROTEIN ECFA1"/>
    <property type="match status" value="1"/>
</dbReference>
<dbReference type="PANTHER" id="PTHR43553">
    <property type="entry name" value="HEAVY METAL TRANSPORTER"/>
    <property type="match status" value="1"/>
</dbReference>
<dbReference type="Pfam" id="PF00005">
    <property type="entry name" value="ABC_tran"/>
    <property type="match status" value="1"/>
</dbReference>
<dbReference type="SMART" id="SM00382">
    <property type="entry name" value="AAA"/>
    <property type="match status" value="1"/>
</dbReference>
<dbReference type="SUPFAM" id="SSF52540">
    <property type="entry name" value="P-loop containing nucleoside triphosphate hydrolases"/>
    <property type="match status" value="1"/>
</dbReference>
<dbReference type="PROSITE" id="PS00211">
    <property type="entry name" value="ABC_TRANSPORTER_1"/>
    <property type="match status" value="1"/>
</dbReference>
<dbReference type="PROSITE" id="PS50893">
    <property type="entry name" value="ABC_TRANSPORTER_2"/>
    <property type="match status" value="1"/>
</dbReference>
<dbReference type="PROSITE" id="PS51246">
    <property type="entry name" value="CBIO"/>
    <property type="match status" value="1"/>
</dbReference>
<reference key="1">
    <citation type="journal article" date="1999" name="Nature">
        <title>Evidence for lateral gene transfer between Archaea and Bacteria from genome sequence of Thermotoga maritima.</title>
        <authorList>
            <person name="Nelson K.E."/>
            <person name="Clayton R.A."/>
            <person name="Gill S.R."/>
            <person name="Gwinn M.L."/>
            <person name="Dodson R.J."/>
            <person name="Haft D.H."/>
            <person name="Hickey E.K."/>
            <person name="Peterson J.D."/>
            <person name="Nelson W.C."/>
            <person name="Ketchum K.A."/>
            <person name="McDonald L.A."/>
            <person name="Utterback T.R."/>
            <person name="Malek J.A."/>
            <person name="Linher K.D."/>
            <person name="Garrett M.M."/>
            <person name="Stewart A.M."/>
            <person name="Cotton M.D."/>
            <person name="Pratt M.S."/>
            <person name="Phillips C.A."/>
            <person name="Richardson D.L."/>
            <person name="Heidelberg J.F."/>
            <person name="Sutton G.G."/>
            <person name="Fleischmann R.D."/>
            <person name="Eisen J.A."/>
            <person name="White O."/>
            <person name="Salzberg S.L."/>
            <person name="Smith H.O."/>
            <person name="Venter J.C."/>
            <person name="Fraser C.M."/>
        </authorList>
    </citation>
    <scope>NUCLEOTIDE SEQUENCE [LARGE SCALE GENOMIC DNA]</scope>
    <source>
        <strain>ATCC 43589 / DSM 3109 / JCM 10099 / NBRC 100826 / MSB8</strain>
    </source>
</reference>
<reference key="2">
    <citation type="journal article" date="2013" name="Proc. Natl. Acad. Sci. U.S.A.">
        <title>Assembly and mechanism of a group II ECF transporter.</title>
        <authorList>
            <person name="Karpowich N.K."/>
            <person name="Wang D.N."/>
        </authorList>
    </citation>
    <scope>FUNCTION AS A TRANSPORT COMPONENT</scope>
    <scope>SUBUNIT</scope>
    <scope>SUBCELLULAR LOCATION</scope>
    <scope>EXPRESSION IN E.COLI</scope>
    <scope>ATP-BINDING</scope>
    <scope>X-RAY CRYSTALLOGRAPHY (2.7 ANGSTROMS) OF 5-259 IN COMPLEX WITH ADP</scope>
    <source>
        <strain>ATCC 43589 / DSM 3109 / JCM 10099 / NBRC 100826 / MSB8</strain>
    </source>
</reference>